<reference key="1">
    <citation type="journal article" date="2000" name="Nature">
        <title>Sequence and analysis of chromosome 3 of the plant Arabidopsis thaliana.</title>
        <authorList>
            <person name="Salanoubat M."/>
            <person name="Lemcke K."/>
            <person name="Rieger M."/>
            <person name="Ansorge W."/>
            <person name="Unseld M."/>
            <person name="Fartmann B."/>
            <person name="Valle G."/>
            <person name="Bloecker H."/>
            <person name="Perez-Alonso M."/>
            <person name="Obermaier B."/>
            <person name="Delseny M."/>
            <person name="Boutry M."/>
            <person name="Grivell L.A."/>
            <person name="Mache R."/>
            <person name="Puigdomenech P."/>
            <person name="De Simone V."/>
            <person name="Choisne N."/>
            <person name="Artiguenave F."/>
            <person name="Robert C."/>
            <person name="Brottier P."/>
            <person name="Wincker P."/>
            <person name="Cattolico L."/>
            <person name="Weissenbach J."/>
            <person name="Saurin W."/>
            <person name="Quetier F."/>
            <person name="Schaefer M."/>
            <person name="Mueller-Auer S."/>
            <person name="Gabel C."/>
            <person name="Fuchs M."/>
            <person name="Benes V."/>
            <person name="Wurmbach E."/>
            <person name="Drzonek H."/>
            <person name="Erfle H."/>
            <person name="Jordan N."/>
            <person name="Bangert S."/>
            <person name="Wiedelmann R."/>
            <person name="Kranz H."/>
            <person name="Voss H."/>
            <person name="Holland R."/>
            <person name="Brandt P."/>
            <person name="Nyakatura G."/>
            <person name="Vezzi A."/>
            <person name="D'Angelo M."/>
            <person name="Pallavicini A."/>
            <person name="Toppo S."/>
            <person name="Simionati B."/>
            <person name="Conrad A."/>
            <person name="Hornischer K."/>
            <person name="Kauer G."/>
            <person name="Loehnert T.-H."/>
            <person name="Nordsiek G."/>
            <person name="Reichelt J."/>
            <person name="Scharfe M."/>
            <person name="Schoen O."/>
            <person name="Bargues M."/>
            <person name="Terol J."/>
            <person name="Climent J."/>
            <person name="Navarro P."/>
            <person name="Collado C."/>
            <person name="Perez-Perez A."/>
            <person name="Ottenwaelder B."/>
            <person name="Duchemin D."/>
            <person name="Cooke R."/>
            <person name="Laudie M."/>
            <person name="Berger-Llauro C."/>
            <person name="Purnelle B."/>
            <person name="Masuy D."/>
            <person name="de Haan M."/>
            <person name="Maarse A.C."/>
            <person name="Alcaraz J.-P."/>
            <person name="Cottet A."/>
            <person name="Casacuberta E."/>
            <person name="Monfort A."/>
            <person name="Argiriou A."/>
            <person name="Flores M."/>
            <person name="Liguori R."/>
            <person name="Vitale D."/>
            <person name="Mannhaupt G."/>
            <person name="Haase D."/>
            <person name="Schoof H."/>
            <person name="Rudd S."/>
            <person name="Zaccaria P."/>
            <person name="Mewes H.-W."/>
            <person name="Mayer K.F.X."/>
            <person name="Kaul S."/>
            <person name="Town C.D."/>
            <person name="Koo H.L."/>
            <person name="Tallon L.J."/>
            <person name="Jenkins J."/>
            <person name="Rooney T."/>
            <person name="Rizzo M."/>
            <person name="Walts A."/>
            <person name="Utterback T."/>
            <person name="Fujii C.Y."/>
            <person name="Shea T.P."/>
            <person name="Creasy T.H."/>
            <person name="Haas B."/>
            <person name="Maiti R."/>
            <person name="Wu D."/>
            <person name="Peterson J."/>
            <person name="Van Aken S."/>
            <person name="Pai G."/>
            <person name="Militscher J."/>
            <person name="Sellers P."/>
            <person name="Gill J.E."/>
            <person name="Feldblyum T.V."/>
            <person name="Preuss D."/>
            <person name="Lin X."/>
            <person name="Nierman W.C."/>
            <person name="Salzberg S.L."/>
            <person name="White O."/>
            <person name="Venter J.C."/>
            <person name="Fraser C.M."/>
            <person name="Kaneko T."/>
            <person name="Nakamura Y."/>
            <person name="Sato S."/>
            <person name="Kato T."/>
            <person name="Asamizu E."/>
            <person name="Sasamoto S."/>
            <person name="Kimura T."/>
            <person name="Idesawa K."/>
            <person name="Kawashima K."/>
            <person name="Kishida Y."/>
            <person name="Kiyokawa C."/>
            <person name="Kohara M."/>
            <person name="Matsumoto M."/>
            <person name="Matsuno A."/>
            <person name="Muraki A."/>
            <person name="Nakayama S."/>
            <person name="Nakazaki N."/>
            <person name="Shinpo S."/>
            <person name="Takeuchi C."/>
            <person name="Wada T."/>
            <person name="Watanabe A."/>
            <person name="Yamada M."/>
            <person name="Yasuda M."/>
            <person name="Tabata S."/>
        </authorList>
    </citation>
    <scope>NUCLEOTIDE SEQUENCE [LARGE SCALE GENOMIC DNA]</scope>
    <source>
        <strain>cv. Columbia</strain>
    </source>
</reference>
<reference key="2">
    <citation type="journal article" date="2017" name="Plant J.">
        <title>Araport11: a complete reannotation of the Arabidopsis thaliana reference genome.</title>
        <authorList>
            <person name="Cheng C.Y."/>
            <person name="Krishnakumar V."/>
            <person name="Chan A.P."/>
            <person name="Thibaud-Nissen F."/>
            <person name="Schobel S."/>
            <person name="Town C.D."/>
        </authorList>
    </citation>
    <scope>GENOME REANNOTATION</scope>
    <source>
        <strain>cv. Columbia</strain>
    </source>
</reference>
<reference key="3">
    <citation type="submission" date="2006-12" db="EMBL/GenBank/DDBJ databases">
        <title>Arabidopsis ORF clones.</title>
        <authorList>
            <person name="Bautista V.R."/>
            <person name="Kim C.J."/>
            <person name="Chen H."/>
            <person name="Quinitio C."/>
            <person name="Ecker J.R."/>
        </authorList>
    </citation>
    <scope>NUCLEOTIDE SEQUENCE [LARGE SCALE MRNA] (ISOFORM 2)</scope>
</reference>
<reference key="4">
    <citation type="journal article" date="2005" name="FEBS Lett.">
        <title>An Arabidopsis Rhomboid homolog is an intramembrane protease in plants.</title>
        <authorList>
            <person name="Kanaoka M.M."/>
            <person name="Urban S."/>
            <person name="Freeman M."/>
            <person name="Okada K."/>
        </authorList>
    </citation>
    <scope>GENE FAMILY</scope>
    <scope>NOMENCLATURE</scope>
    <source>
        <strain>cv. Columbia</strain>
    </source>
</reference>
<reference key="5">
    <citation type="journal article" date="2006" name="BMC Genomics">
        <title>Cross genome comparisons of serine proteases in Arabidopsis and rice.</title>
        <authorList>
            <person name="Tripathi L.P."/>
            <person name="Sowdhamini R."/>
        </authorList>
    </citation>
    <scope>GENE FAMILY</scope>
    <scope>NOMENCLATURE</scope>
</reference>
<reference key="6">
    <citation type="journal article" date="2006" name="BMC Plant Biol.">
        <title>Protease gene families in Populus and Arabidopsis.</title>
        <authorList>
            <person name="Garcia-Lorenzo M."/>
            <person name="Sjodin A."/>
            <person name="Jansson S."/>
            <person name="Funk C."/>
        </authorList>
    </citation>
    <scope>GENE FAMILY</scope>
    <scope>NOMENCLATURE</scope>
</reference>
<reference key="7">
    <citation type="journal article" date="2007" name="Genome Res.">
        <title>Functional and evolutionary implications of enhanced genomic analysis of rhomboid intramembrane proteases.</title>
        <authorList>
            <person name="Lemberg M.K."/>
            <person name="Freeman M."/>
        </authorList>
    </citation>
    <scope>GENE FAMILY</scope>
    <scope>NOMENCLATURE</scope>
</reference>
<reference key="8">
    <citation type="journal article" date="2012" name="Physiol. Plantarum">
        <title>Rhomboid proteases in plants - still in square one?</title>
        <authorList>
            <person name="Knopf R.R."/>
            <person name="Adam Z."/>
        </authorList>
    </citation>
    <scope>REVIEW</scope>
</reference>
<comment type="function">
    <text evidence="7">Probable rhomboid-type serine protease that catalyzes intramembrane proteolysis.</text>
</comment>
<comment type="catalytic activity">
    <reaction evidence="2">
        <text>Cleaves type-1 transmembrane domains using a catalytic dyad composed of serine and histidine that are contributed by different transmembrane domains.</text>
        <dbReference type="EC" id="3.4.21.105"/>
    </reaction>
</comment>
<comment type="subcellular location">
    <subcellularLocation>
        <location evidence="3">Membrane</location>
        <topology evidence="3">Multi-pass membrane protein</topology>
    </subcellularLocation>
</comment>
<comment type="alternative products">
    <event type="alternative splicing"/>
    <isoform>
        <id>F4JBM4-1</id>
        <name>1</name>
        <sequence type="displayed"/>
    </isoform>
    <isoform>
        <id>F4JBM4-2</id>
        <name>2</name>
        <sequence type="described" ref="VSP_057731"/>
    </isoform>
</comment>
<comment type="similarity">
    <text evidence="8">Belongs to the peptidase S54 family.</text>
</comment>
<comment type="sequence caution" evidence="8">
    <conflict type="erroneous gene model prediction">
        <sequence resource="EMBL-CDS" id="CAB88340"/>
    </conflict>
</comment>
<sequence length="394" mass="43508">MGEKDSETAPIWGKTRERERSNNNNIQPMDLESSSSVSGQQRSLTQSRSSYEERGRGVKEFRSWFPWLIPCFVVANVAVFVITMYVNNCPKKSGDCFADFLGRFSFQNTRENPLLGPSSLTLQTMGGLDVKKVVKGDEGWRLLSCNWLHGGVVHLLMNMLTLLFIGIRMEREFGFIRIGLLYLISGFGGSILSALFLRSNISVGASGAVFGLLGGMLSEIFINWTIYSNKVVTIVTLVLIVAVNLGLGVLPGVDNFAHIGGFATGFLLGFVLLIRPHYGWINQRNGPGAKPHRFKIYQGILWTISLLILVAGFIVGLISLFNNVDGNEHCSWCHYLSCVPTSKWSCNREPASCTTTQLGNQLSMTCLRNGKSASYILANPSDSRINSLCVQLCR</sequence>
<feature type="chain" id="PRO_0000433325" description="RHOMBOID-like protein 4">
    <location>
        <begin position="1"/>
        <end position="394"/>
    </location>
</feature>
<feature type="transmembrane region" description="Helical" evidence="3">
    <location>
        <begin position="64"/>
        <end position="84"/>
    </location>
</feature>
<feature type="transmembrane region" description="Helical" evidence="3">
    <location>
        <begin position="147"/>
        <end position="167"/>
    </location>
</feature>
<feature type="transmembrane region" description="Helical" evidence="3">
    <location>
        <begin position="175"/>
        <end position="195"/>
    </location>
</feature>
<feature type="transmembrane region" description="Helical" evidence="3">
    <location>
        <begin position="201"/>
        <end position="221"/>
    </location>
</feature>
<feature type="transmembrane region" description="Helical" evidence="3">
    <location>
        <begin position="231"/>
        <end position="251"/>
    </location>
</feature>
<feature type="transmembrane region" description="Helical" evidence="3">
    <location>
        <begin position="254"/>
        <end position="274"/>
    </location>
</feature>
<feature type="transmembrane region" description="Helical" evidence="3">
    <location>
        <begin position="300"/>
        <end position="320"/>
    </location>
</feature>
<feature type="region of interest" description="Disordered" evidence="4">
    <location>
        <begin position="1"/>
        <end position="51"/>
    </location>
</feature>
<feature type="compositionally biased region" description="Polar residues" evidence="4">
    <location>
        <begin position="39"/>
        <end position="49"/>
    </location>
</feature>
<feature type="active site" description="Nucleophile" evidence="1">
    <location>
        <position position="206"/>
    </location>
</feature>
<feature type="active site" description="Charge relay system" evidence="1">
    <location>
        <position position="258"/>
    </location>
</feature>
<feature type="splice variant" id="VSP_057731" description="In isoform 2.">
    <location>
        <begin position="1"/>
        <end position="124"/>
    </location>
</feature>
<name>RBL4_ARATH</name>
<proteinExistence type="evidence at transcript level"/>
<evidence type="ECO:0000250" key="1">
    <source>
        <dbReference type="UniProtKB" id="P54493"/>
    </source>
</evidence>
<evidence type="ECO:0000250" key="2">
    <source>
        <dbReference type="UniProtKB" id="Q9CAN1"/>
    </source>
</evidence>
<evidence type="ECO:0000255" key="3"/>
<evidence type="ECO:0000256" key="4">
    <source>
        <dbReference type="SAM" id="MobiDB-lite"/>
    </source>
</evidence>
<evidence type="ECO:0000303" key="5">
    <source>
    </source>
</evidence>
<evidence type="ECO:0000303" key="6">
    <source>
    </source>
</evidence>
<evidence type="ECO:0000303" key="7">
    <source>
    </source>
</evidence>
<evidence type="ECO:0000305" key="8"/>
<evidence type="ECO:0000312" key="9">
    <source>
        <dbReference type="Araport" id="AT3G53780"/>
    </source>
</evidence>
<evidence type="ECO:0000312" key="10">
    <source>
        <dbReference type="EMBL" id="CAB88340.1"/>
    </source>
</evidence>
<evidence type="ECO:0000312" key="11">
    <source>
        <dbReference type="Proteomes" id="UP000006548"/>
    </source>
</evidence>
<accession>F4JBM4</accession>
<accession>A1A6L3</accession>
<accession>Q9M348</accession>
<dbReference type="EC" id="3.4.21.105" evidence="2"/>
<dbReference type="EMBL" id="AL132960">
    <property type="protein sequence ID" value="CAB88340.1"/>
    <property type="status" value="ALT_SEQ"/>
    <property type="molecule type" value="Genomic_DNA"/>
</dbReference>
<dbReference type="EMBL" id="CP002686">
    <property type="protein sequence ID" value="AEE79142.1"/>
    <property type="molecule type" value="Genomic_DNA"/>
</dbReference>
<dbReference type="EMBL" id="CP002686">
    <property type="protein sequence ID" value="AEE79143.1"/>
    <property type="molecule type" value="Genomic_DNA"/>
</dbReference>
<dbReference type="EMBL" id="BT029533">
    <property type="protein sequence ID" value="ABL66789.1"/>
    <property type="molecule type" value="mRNA"/>
</dbReference>
<dbReference type="PIR" id="T45918">
    <property type="entry name" value="T45918"/>
</dbReference>
<dbReference type="RefSeq" id="NP_566989.1">
    <molecule id="F4JBM4-2"/>
    <property type="nucleotide sequence ID" value="NM_115238.2"/>
</dbReference>
<dbReference type="RefSeq" id="NP_850698.1">
    <molecule id="F4JBM4-1"/>
    <property type="nucleotide sequence ID" value="NM_180367.2"/>
</dbReference>
<dbReference type="SMR" id="F4JBM4"/>
<dbReference type="FunCoup" id="F4JBM4">
    <property type="interactions" value="556"/>
</dbReference>
<dbReference type="STRING" id="3702.F4JBM4"/>
<dbReference type="MEROPS" id="S54.A06"/>
<dbReference type="PaxDb" id="3702-AT3G53780.2"/>
<dbReference type="ProteomicsDB" id="236524">
    <molecule id="F4JBM4-1"/>
</dbReference>
<dbReference type="EnsemblPlants" id="AT3G53780.1">
    <molecule id="F4JBM4-2"/>
    <property type="protein sequence ID" value="AT3G53780.1"/>
    <property type="gene ID" value="AT3G53780"/>
</dbReference>
<dbReference type="EnsemblPlants" id="AT3G53780.2">
    <molecule id="F4JBM4-1"/>
    <property type="protein sequence ID" value="AT3G53780.2"/>
    <property type="gene ID" value="AT3G53780"/>
</dbReference>
<dbReference type="GeneID" id="824545"/>
<dbReference type="Gramene" id="AT3G53780.1">
    <molecule id="F4JBM4-2"/>
    <property type="protein sequence ID" value="AT3G53780.1"/>
    <property type="gene ID" value="AT3G53780"/>
</dbReference>
<dbReference type="Gramene" id="AT3G53780.2">
    <molecule id="F4JBM4-1"/>
    <property type="protein sequence ID" value="AT3G53780.2"/>
    <property type="gene ID" value="AT3G53780"/>
</dbReference>
<dbReference type="KEGG" id="ath:AT3G53780"/>
<dbReference type="Araport" id="AT3G53780"/>
<dbReference type="TAIR" id="AT3G53780">
    <property type="gene designation" value="RBL4"/>
</dbReference>
<dbReference type="eggNOG" id="KOG2289">
    <property type="taxonomic scope" value="Eukaryota"/>
</dbReference>
<dbReference type="InParanoid" id="F4JBM4"/>
<dbReference type="OrthoDB" id="418595at2759"/>
<dbReference type="PRO" id="PR:F4JBM4"/>
<dbReference type="Proteomes" id="UP000006548">
    <property type="component" value="Chromosome 3"/>
</dbReference>
<dbReference type="ExpressionAtlas" id="F4JBM4">
    <property type="expression patterns" value="baseline and differential"/>
</dbReference>
<dbReference type="GO" id="GO:0016020">
    <property type="term" value="C:membrane"/>
    <property type="evidence" value="ECO:0007669"/>
    <property type="project" value="UniProtKB-SubCell"/>
</dbReference>
<dbReference type="GO" id="GO:0009506">
    <property type="term" value="C:plasmodesma"/>
    <property type="evidence" value="ECO:0007005"/>
    <property type="project" value="TAIR"/>
</dbReference>
<dbReference type="GO" id="GO:0004252">
    <property type="term" value="F:serine-type endopeptidase activity"/>
    <property type="evidence" value="ECO:0007669"/>
    <property type="project" value="InterPro"/>
</dbReference>
<dbReference type="GO" id="GO:0006508">
    <property type="term" value="P:proteolysis"/>
    <property type="evidence" value="ECO:0007669"/>
    <property type="project" value="UniProtKB-KW"/>
</dbReference>
<dbReference type="FunFam" id="1.20.1540.10:FF:000019">
    <property type="entry name" value="RHOMBOID-like protein"/>
    <property type="match status" value="1"/>
</dbReference>
<dbReference type="Gene3D" id="1.20.1540.10">
    <property type="entry name" value="Rhomboid-like"/>
    <property type="match status" value="1"/>
</dbReference>
<dbReference type="InterPro" id="IPR002610">
    <property type="entry name" value="Peptidase_S54_rhomboid-like"/>
</dbReference>
<dbReference type="InterPro" id="IPR022764">
    <property type="entry name" value="Peptidase_S54_rhomboid_dom"/>
</dbReference>
<dbReference type="InterPro" id="IPR035952">
    <property type="entry name" value="Rhomboid-like_sf"/>
</dbReference>
<dbReference type="PANTHER" id="PTHR22936:SF79">
    <property type="entry name" value="RHOMBOID-LIKE PROTEIN 4"/>
    <property type="match status" value="1"/>
</dbReference>
<dbReference type="PANTHER" id="PTHR22936">
    <property type="entry name" value="RHOMBOID-RELATED"/>
    <property type="match status" value="1"/>
</dbReference>
<dbReference type="Pfam" id="PF01694">
    <property type="entry name" value="Rhomboid"/>
    <property type="match status" value="1"/>
</dbReference>
<dbReference type="SUPFAM" id="SSF144091">
    <property type="entry name" value="Rhomboid-like"/>
    <property type="match status" value="1"/>
</dbReference>
<protein>
    <recommendedName>
        <fullName evidence="5 6">RHOMBOID-like protein 4</fullName>
        <shortName evidence="5 6">AtRBL4</shortName>
        <ecNumber evidence="2">3.4.21.105</ecNumber>
    </recommendedName>
</protein>
<keyword id="KW-0025">Alternative splicing</keyword>
<keyword id="KW-0378">Hydrolase</keyword>
<keyword id="KW-0472">Membrane</keyword>
<keyword id="KW-0645">Protease</keyword>
<keyword id="KW-1185">Reference proteome</keyword>
<keyword id="KW-0720">Serine protease</keyword>
<keyword id="KW-0812">Transmembrane</keyword>
<keyword id="KW-1133">Transmembrane helix</keyword>
<gene>
    <name evidence="5 6" type="primary">RBL4</name>
    <name evidence="9" type="ordered locus">At3g53780</name>
    <name evidence="10" type="ORF">F5K20.80</name>
</gene>
<organism evidence="11">
    <name type="scientific">Arabidopsis thaliana</name>
    <name type="common">Mouse-ear cress</name>
    <dbReference type="NCBI Taxonomy" id="3702"/>
    <lineage>
        <taxon>Eukaryota</taxon>
        <taxon>Viridiplantae</taxon>
        <taxon>Streptophyta</taxon>
        <taxon>Embryophyta</taxon>
        <taxon>Tracheophyta</taxon>
        <taxon>Spermatophyta</taxon>
        <taxon>Magnoliopsida</taxon>
        <taxon>eudicotyledons</taxon>
        <taxon>Gunneridae</taxon>
        <taxon>Pentapetalae</taxon>
        <taxon>rosids</taxon>
        <taxon>malvids</taxon>
        <taxon>Brassicales</taxon>
        <taxon>Brassicaceae</taxon>
        <taxon>Camelineae</taxon>
        <taxon>Arabidopsis</taxon>
    </lineage>
</organism>